<organism>
    <name type="scientific">Pasteurella multocida (strain Pm70)</name>
    <dbReference type="NCBI Taxonomy" id="272843"/>
    <lineage>
        <taxon>Bacteria</taxon>
        <taxon>Pseudomonadati</taxon>
        <taxon>Pseudomonadota</taxon>
        <taxon>Gammaproteobacteria</taxon>
        <taxon>Pasteurellales</taxon>
        <taxon>Pasteurellaceae</taxon>
        <taxon>Pasteurella</taxon>
    </lineage>
</organism>
<accession>Q9CN18</accession>
<evidence type="ECO:0000250" key="1"/>
<evidence type="ECO:0000256" key="2">
    <source>
        <dbReference type="SAM" id="MobiDB-lite"/>
    </source>
</evidence>
<evidence type="ECO:0000305" key="3"/>
<comment type="function">
    <text evidence="1">This protein is one of the two subunits of integration host factor, a specific DNA-binding protein that functions in genetic recombination as well as in transcriptional and translational control.</text>
</comment>
<comment type="subunit">
    <text evidence="1">Heterodimer of an alpha and a beta chain.</text>
</comment>
<comment type="similarity">
    <text evidence="3">Belongs to the bacterial histone-like protein family.</text>
</comment>
<dbReference type="EMBL" id="AE004439">
    <property type="protein sequence ID" value="AAK02712.1"/>
    <property type="molecule type" value="Genomic_DNA"/>
</dbReference>
<dbReference type="RefSeq" id="WP_005722212.1">
    <property type="nucleotide sequence ID" value="NC_002663.1"/>
</dbReference>
<dbReference type="SMR" id="Q9CN18"/>
<dbReference type="STRING" id="272843.PM0628"/>
<dbReference type="EnsemblBacteria" id="AAK02712">
    <property type="protein sequence ID" value="AAK02712"/>
    <property type="gene ID" value="PM0628"/>
</dbReference>
<dbReference type="KEGG" id="pmu:PM0628"/>
<dbReference type="HOGENOM" id="CLU_105066_1_3_6"/>
<dbReference type="OrthoDB" id="9797747at2"/>
<dbReference type="Proteomes" id="UP000000809">
    <property type="component" value="Chromosome"/>
</dbReference>
<dbReference type="GO" id="GO:0005829">
    <property type="term" value="C:cytosol"/>
    <property type="evidence" value="ECO:0007669"/>
    <property type="project" value="TreeGrafter"/>
</dbReference>
<dbReference type="GO" id="GO:0003677">
    <property type="term" value="F:DNA binding"/>
    <property type="evidence" value="ECO:0007669"/>
    <property type="project" value="UniProtKB-UniRule"/>
</dbReference>
<dbReference type="GO" id="GO:0030527">
    <property type="term" value="F:structural constituent of chromatin"/>
    <property type="evidence" value="ECO:0007669"/>
    <property type="project" value="InterPro"/>
</dbReference>
<dbReference type="GO" id="GO:0006310">
    <property type="term" value="P:DNA recombination"/>
    <property type="evidence" value="ECO:0007669"/>
    <property type="project" value="UniProtKB-UniRule"/>
</dbReference>
<dbReference type="GO" id="GO:0009893">
    <property type="term" value="P:positive regulation of metabolic process"/>
    <property type="evidence" value="ECO:0007669"/>
    <property type="project" value="UniProtKB-ARBA"/>
</dbReference>
<dbReference type="GO" id="GO:0006355">
    <property type="term" value="P:regulation of DNA-templated transcription"/>
    <property type="evidence" value="ECO:0007669"/>
    <property type="project" value="UniProtKB-UniRule"/>
</dbReference>
<dbReference type="GO" id="GO:0006417">
    <property type="term" value="P:regulation of translation"/>
    <property type="evidence" value="ECO:0007669"/>
    <property type="project" value="UniProtKB-UniRule"/>
</dbReference>
<dbReference type="CDD" id="cd13835">
    <property type="entry name" value="IHF_A"/>
    <property type="match status" value="1"/>
</dbReference>
<dbReference type="FunFam" id="4.10.520.10:FF:000002">
    <property type="entry name" value="Integration host factor subunit alpha"/>
    <property type="match status" value="1"/>
</dbReference>
<dbReference type="Gene3D" id="4.10.520.10">
    <property type="entry name" value="IHF-like DNA-binding proteins"/>
    <property type="match status" value="1"/>
</dbReference>
<dbReference type="HAMAP" id="MF_00380">
    <property type="entry name" value="IHF_alpha"/>
    <property type="match status" value="1"/>
</dbReference>
<dbReference type="InterPro" id="IPR000119">
    <property type="entry name" value="Hist_DNA-bd"/>
</dbReference>
<dbReference type="InterPro" id="IPR020816">
    <property type="entry name" value="Histone-like_DNA-bd_CS"/>
</dbReference>
<dbReference type="InterPro" id="IPR010992">
    <property type="entry name" value="IHF-like_DNA-bd_dom_sf"/>
</dbReference>
<dbReference type="InterPro" id="IPR005684">
    <property type="entry name" value="IHF_alpha"/>
</dbReference>
<dbReference type="NCBIfam" id="TIGR00987">
    <property type="entry name" value="himA"/>
    <property type="match status" value="1"/>
</dbReference>
<dbReference type="NCBIfam" id="NF001401">
    <property type="entry name" value="PRK00285.1"/>
    <property type="match status" value="1"/>
</dbReference>
<dbReference type="PANTHER" id="PTHR33175">
    <property type="entry name" value="DNA-BINDING PROTEIN HU"/>
    <property type="match status" value="1"/>
</dbReference>
<dbReference type="PANTHER" id="PTHR33175:SF2">
    <property type="entry name" value="INTEGRATION HOST FACTOR SUBUNIT ALPHA"/>
    <property type="match status" value="1"/>
</dbReference>
<dbReference type="Pfam" id="PF00216">
    <property type="entry name" value="Bac_DNA_binding"/>
    <property type="match status" value="1"/>
</dbReference>
<dbReference type="PRINTS" id="PR01727">
    <property type="entry name" value="DNABINDINGHU"/>
</dbReference>
<dbReference type="SMART" id="SM00411">
    <property type="entry name" value="BHL"/>
    <property type="match status" value="1"/>
</dbReference>
<dbReference type="SUPFAM" id="SSF47729">
    <property type="entry name" value="IHF-like DNA-binding proteins"/>
    <property type="match status" value="1"/>
</dbReference>
<dbReference type="PROSITE" id="PS00045">
    <property type="entry name" value="HISTONE_LIKE"/>
    <property type="match status" value="1"/>
</dbReference>
<protein>
    <recommendedName>
        <fullName>Integration host factor subunit alpha</fullName>
        <shortName>IHF-alpha</shortName>
    </recommendedName>
</protein>
<gene>
    <name type="primary">ihfA</name>
    <name type="synonym">himA</name>
    <name type="ordered locus">PM0628</name>
</gene>
<name>IHFA_PASMU</name>
<sequence length="98" mass="11078">MTLTKVELADNLIEKLHLNKRDAKELVENFFEEIRVALETGEDVKLSGFGNFELRDKSSRPGRNPKTGESVPVSARRVVAFKPGQKLRARVEKTKPKS</sequence>
<feature type="chain" id="PRO_0000105016" description="Integration host factor subunit alpha">
    <location>
        <begin position="1"/>
        <end position="98"/>
    </location>
</feature>
<feature type="region of interest" description="Disordered" evidence="2">
    <location>
        <begin position="54"/>
        <end position="74"/>
    </location>
</feature>
<keyword id="KW-0233">DNA recombination</keyword>
<keyword id="KW-0238">DNA-binding</keyword>
<keyword id="KW-1185">Reference proteome</keyword>
<keyword id="KW-0804">Transcription</keyword>
<keyword id="KW-0805">Transcription regulation</keyword>
<keyword id="KW-0810">Translation regulation</keyword>
<reference key="1">
    <citation type="journal article" date="2001" name="Proc. Natl. Acad. Sci. U.S.A.">
        <title>Complete genomic sequence of Pasteurella multocida Pm70.</title>
        <authorList>
            <person name="May B.J."/>
            <person name="Zhang Q."/>
            <person name="Li L.L."/>
            <person name="Paustian M.L."/>
            <person name="Whittam T.S."/>
            <person name="Kapur V."/>
        </authorList>
    </citation>
    <scope>NUCLEOTIDE SEQUENCE [LARGE SCALE GENOMIC DNA]</scope>
    <source>
        <strain>Pm70</strain>
    </source>
</reference>
<proteinExistence type="inferred from homology"/>